<organism>
    <name type="scientific">Bacillus anthracis</name>
    <dbReference type="NCBI Taxonomy" id="1392"/>
    <lineage>
        <taxon>Bacteria</taxon>
        <taxon>Bacillati</taxon>
        <taxon>Bacillota</taxon>
        <taxon>Bacilli</taxon>
        <taxon>Bacillales</taxon>
        <taxon>Bacillaceae</taxon>
        <taxon>Bacillus</taxon>
        <taxon>Bacillus cereus group</taxon>
    </lineage>
</organism>
<name>ASBD_BACAN</name>
<proteinExistence type="evidence at protein level"/>
<sequence length="91" mass="10628">MRREALKNAVLKIMTEKMELKNVTHLEETMRLNQDLYIDSVMMLQLIVYIEMDVKLCVPEDEVDPKAFLTVGSLLDFMEELQPLQDVNVNN</sequence>
<reference key="1">
    <citation type="journal article" date="2009" name="J. Bacteriol.">
        <title>The complete genome sequence of Bacillus anthracis Ames 'Ancestor'.</title>
        <authorList>
            <person name="Ravel J."/>
            <person name="Jiang L."/>
            <person name="Stanley S.T."/>
            <person name="Wilson M.R."/>
            <person name="Decker R.S."/>
            <person name="Read T.D."/>
            <person name="Worsham P."/>
            <person name="Keim P.S."/>
            <person name="Salzberg S.L."/>
            <person name="Fraser-Liggett C.M."/>
            <person name="Rasko D.A."/>
        </authorList>
    </citation>
    <scope>NUCLEOTIDE SEQUENCE [LARGE SCALE GENOMIC DNA]</scope>
    <source>
        <strain>Ames ancestor</strain>
    </source>
</reference>
<reference key="2">
    <citation type="journal article" date="2007" name="J. Bacteriol.">
        <title>Biosynthetic analysis of the petrobactin siderophore pathway from Bacillus anthracis.</title>
        <authorList>
            <person name="Lee J.Y."/>
            <person name="Janes B.K."/>
            <person name="Passalacqua K.D."/>
            <person name="Pfleger B.F."/>
            <person name="Bergman N.H."/>
            <person name="Liu H."/>
            <person name="Haakansson K."/>
            <person name="Somu R.V."/>
            <person name="Aldrich C.C."/>
            <person name="Cendrowski S."/>
            <person name="Hanna P.C."/>
            <person name="Sherman D.H."/>
        </authorList>
    </citation>
    <scope>FUNCTION</scope>
    <scope>PATHWAY</scope>
    <scope>DISRUPTION PHENOTYPE</scope>
    <source>
        <strain>Sterne</strain>
    </source>
</reference>
<reference key="3">
    <citation type="journal article" date="2007" name="Biochemistry">
        <title>Characterization and analysis of early enzymes for petrobactin biosynthesis in Bacillus anthracis.</title>
        <authorList>
            <person name="Pfleger B.F."/>
            <person name="Lee J.Y."/>
            <person name="Somu R.V."/>
            <person name="Aldrich C.C."/>
            <person name="Hanna P.C."/>
            <person name="Sherman D.H."/>
        </authorList>
    </citation>
    <scope>FUNCTION</scope>
    <scope>PATHWAY</scope>
    <scope>PHOSPHOPANTETHEINYLATION AT SER-40</scope>
    <scope>MUTAGENESIS OF SER-40</scope>
    <source>
        <strain>Sterne</strain>
    </source>
</reference>
<reference key="4">
    <citation type="journal article" date="2016" name="Mol. Microbiol.">
        <title>Flying under the radar: The non-canonical biochemistry and molecular biology of petrobactin from Bacillus anthracis.</title>
        <authorList>
            <person name="Hagan A.K."/>
            <person name="Carlson P.E. Jr."/>
            <person name="Hanna P.C."/>
        </authorList>
    </citation>
    <scope>REVIEW</scope>
</reference>
<evidence type="ECO:0000255" key="1">
    <source>
        <dbReference type="PROSITE-ProRule" id="PRU00258"/>
    </source>
</evidence>
<evidence type="ECO:0000269" key="2">
    <source>
    </source>
</evidence>
<evidence type="ECO:0000269" key="3">
    <source>
    </source>
</evidence>
<evidence type="ECO:0000303" key="4">
    <source>
    </source>
</evidence>
<evidence type="ECO:0000305" key="5"/>
<evidence type="ECO:0000312" key="6">
    <source>
        <dbReference type="EMBL" id="AAT31103.1"/>
    </source>
</evidence>
<keyword id="KW-0596">Phosphopantetheine</keyword>
<keyword id="KW-0597">Phosphoprotein</keyword>
<keyword id="KW-1185">Reference proteome</keyword>
<gene>
    <name evidence="4" type="primary">asbD</name>
    <name evidence="6" type="ordered locus">GBAA_1984</name>
</gene>
<feature type="chain" id="PRO_0000450622" description="Acyl carrier protein AsbD">
    <location>
        <begin position="1"/>
        <end position="91"/>
    </location>
</feature>
<feature type="domain" description="Carrier" evidence="1">
    <location>
        <begin position="4"/>
        <end position="82"/>
    </location>
</feature>
<feature type="modified residue" description="O-(pantetheine 4'-phosphoryl)serine" evidence="1 3">
    <location>
        <position position="40"/>
    </location>
</feature>
<feature type="mutagenesis site" description="Loss of phosphopantetheinylation." evidence="3">
    <original>S</original>
    <variation>A</variation>
    <location>
        <position position="40"/>
    </location>
</feature>
<protein>
    <recommendedName>
        <fullName evidence="5">Acyl carrier protein AsbD</fullName>
    </recommendedName>
    <alternativeName>
        <fullName evidence="5">Petrobactin biosynthesis protein AsbD</fullName>
    </alternativeName>
</protein>
<dbReference type="EMBL" id="AE017334">
    <property type="protein sequence ID" value="AAT31103.1"/>
    <property type="molecule type" value="Genomic_DNA"/>
</dbReference>
<dbReference type="RefSeq" id="WP_001250565.1">
    <property type="nucleotide sequence ID" value="NZ_WXXJ01000029.1"/>
</dbReference>
<dbReference type="SMR" id="A0A0J1I1I3"/>
<dbReference type="DNASU" id="1085887"/>
<dbReference type="GeneID" id="45021906"/>
<dbReference type="KEGG" id="bar:GBAA_1984"/>
<dbReference type="PATRIC" id="fig|1392.230.peg.1944"/>
<dbReference type="eggNOG" id="COG0236">
    <property type="taxonomic scope" value="Bacteria"/>
</dbReference>
<dbReference type="HOGENOM" id="CLU_108696_8_2_9"/>
<dbReference type="OMA" id="MDLKLCV"/>
<dbReference type="OrthoDB" id="6370703at2"/>
<dbReference type="UniPathway" id="UPA01005"/>
<dbReference type="Proteomes" id="UP000000594">
    <property type="component" value="Chromosome"/>
</dbReference>
<dbReference type="Gene3D" id="1.10.1200.10">
    <property type="entry name" value="ACP-like"/>
    <property type="match status" value="1"/>
</dbReference>
<dbReference type="InterPro" id="IPR036736">
    <property type="entry name" value="ACP-like_sf"/>
</dbReference>
<dbReference type="InterPro" id="IPR009081">
    <property type="entry name" value="PP-bd_ACP"/>
</dbReference>
<dbReference type="NCBIfam" id="NF005798">
    <property type="entry name" value="PRK07639.1"/>
    <property type="match status" value="1"/>
</dbReference>
<dbReference type="SUPFAM" id="SSF47336">
    <property type="entry name" value="ACP-like"/>
    <property type="match status" value="1"/>
</dbReference>
<dbReference type="PROSITE" id="PS50075">
    <property type="entry name" value="CARRIER"/>
    <property type="match status" value="1"/>
</dbReference>
<accession>A0A0J1I1I3</accession>
<accession>E9RDX8</accession>
<accession>E9RDX9</accession>
<accession>Q6HZY3</accession>
<accession>Q6KTW2</accession>
<accession>Q81RQ6</accession>
<comment type="function">
    <text evidence="2 3">Involved in the biosynthesis of petrobactin, a catecholate siderophore that functions in both iron acquisition and virulence (PubMed:17189355, PubMed:17346033). Aryl-carrier protein that activates 3,4-dihydroxybenzoate (3,4-DHBA) prior to its incorporation into petrobactin (PubMed:17346033).</text>
</comment>
<comment type="pathway">
    <text evidence="2 3">Siderophore biosynthesis; petrobactin biosynthesis.</text>
</comment>
<comment type="PTM">
    <text evidence="3">Activated by the transfer of a 4'-phosphopantetheine group from CoA to Ser-40.</text>
</comment>
<comment type="disruption phenotype">
    <text evidence="2">The deletion mutant cannot produce petrobactin on iron-depleted medium. In vitro analysis show that mutants grow to a very limited extent as vegetative cells in iron-depleted medium but are not able to outgrow from spores under the same culture conditions.</text>
</comment>
<comment type="similarity">
    <text evidence="5">Belongs to the acyl carrier protein (ACP) family.</text>
</comment>